<comment type="function">
    <text evidence="1">Cell wall formation. Catalyzes the transfer of a GlcNAc subunit on undecaprenyl-pyrophosphoryl-MurNAc-pentapeptide (lipid intermediate I) to form undecaprenyl-pyrophosphoryl-MurNAc-(pentapeptide)GlcNAc (lipid intermediate II).</text>
</comment>
<comment type="catalytic activity">
    <reaction evidence="1">
        <text>di-trans,octa-cis-undecaprenyl diphospho-N-acetyl-alpha-D-muramoyl-L-alanyl-D-glutamyl-meso-2,6-diaminopimeloyl-D-alanyl-D-alanine + UDP-N-acetyl-alpha-D-glucosamine = di-trans,octa-cis-undecaprenyl diphospho-[N-acetyl-alpha-D-glucosaminyl-(1-&gt;4)]-N-acetyl-alpha-D-muramoyl-L-alanyl-D-glutamyl-meso-2,6-diaminopimeloyl-D-alanyl-D-alanine + UDP + H(+)</text>
        <dbReference type="Rhea" id="RHEA:31227"/>
        <dbReference type="ChEBI" id="CHEBI:15378"/>
        <dbReference type="ChEBI" id="CHEBI:57705"/>
        <dbReference type="ChEBI" id="CHEBI:58223"/>
        <dbReference type="ChEBI" id="CHEBI:61387"/>
        <dbReference type="ChEBI" id="CHEBI:61388"/>
        <dbReference type="EC" id="2.4.1.227"/>
    </reaction>
</comment>
<comment type="pathway">
    <text evidence="1">Cell wall biogenesis; peptidoglycan biosynthesis.</text>
</comment>
<comment type="subcellular location">
    <subcellularLocation>
        <location evidence="1">Cell inner membrane</location>
        <topology evidence="1">Peripheral membrane protein</topology>
        <orientation evidence="1">Cytoplasmic side</orientation>
    </subcellularLocation>
</comment>
<comment type="similarity">
    <text evidence="1">Belongs to the glycosyltransferase 28 family. MurG subfamily.</text>
</comment>
<sequence length="354" mass="37457">MARRIVILAGGTGGHVFPALAVAGKLRRAGAEVFWMGTRTGLEARVVPAAGYPIDWLSVSGIRGKGLASKAKAPAMLGLACLQALRILRRRKPDAVLGMGGFVAGPGGLMARVLGIPLIIHEQNRIPGTTNRWLSRIANRVLEAFPGAFQASAGAVCTGNPLRQGIETFRDHHTPRVGRHVLVLGGSLGAQALNRIVPRALARLGGEPVAIRHQTGQAMFQETQDLYQQLALTAKVDPFIEDMEEAYGWADLAICRAGAMTVSELAAAGLPAILVPFPYAIDDHQTANADYLAEAGAAVLMPQSSLDEVSLAVEIRALLDQRDRLEAMSAAARNLARYDAAESVAKVCLEEAGA</sequence>
<protein>
    <recommendedName>
        <fullName evidence="1">UDP-N-acetylglucosamine--N-acetylmuramyl-(pentapeptide) pyrophosphoryl-undecaprenol N-acetylglucosamine transferase</fullName>
        <ecNumber evidence="1">2.4.1.227</ecNumber>
    </recommendedName>
    <alternativeName>
        <fullName evidence="1">Undecaprenyl-PP-MurNAc-pentapeptide-UDPGlcNAc GlcNAc transferase</fullName>
    </alternativeName>
</protein>
<name>MURG_METCA</name>
<feature type="chain" id="PRO_0000225067" description="UDP-N-acetylglucosamine--N-acetylmuramyl-(pentapeptide) pyrophosphoryl-undecaprenol N-acetylglucosamine transferase">
    <location>
        <begin position="1"/>
        <end position="354"/>
    </location>
</feature>
<feature type="binding site" evidence="1">
    <location>
        <begin position="12"/>
        <end position="14"/>
    </location>
    <ligand>
        <name>UDP-N-acetyl-alpha-D-glucosamine</name>
        <dbReference type="ChEBI" id="CHEBI:57705"/>
    </ligand>
</feature>
<feature type="binding site" evidence="1">
    <location>
        <position position="124"/>
    </location>
    <ligand>
        <name>UDP-N-acetyl-alpha-D-glucosamine</name>
        <dbReference type="ChEBI" id="CHEBI:57705"/>
    </ligand>
</feature>
<feature type="binding site" evidence="1">
    <location>
        <position position="163"/>
    </location>
    <ligand>
        <name>UDP-N-acetyl-alpha-D-glucosamine</name>
        <dbReference type="ChEBI" id="CHEBI:57705"/>
    </ligand>
</feature>
<feature type="binding site" evidence="1">
    <location>
        <position position="187"/>
    </location>
    <ligand>
        <name>UDP-N-acetyl-alpha-D-glucosamine</name>
        <dbReference type="ChEBI" id="CHEBI:57705"/>
    </ligand>
</feature>
<feature type="binding site" evidence="1">
    <location>
        <position position="240"/>
    </location>
    <ligand>
        <name>UDP-N-acetyl-alpha-D-glucosamine</name>
        <dbReference type="ChEBI" id="CHEBI:57705"/>
    </ligand>
</feature>
<feature type="binding site" evidence="1">
    <location>
        <position position="285"/>
    </location>
    <ligand>
        <name>UDP-N-acetyl-alpha-D-glucosamine</name>
        <dbReference type="ChEBI" id="CHEBI:57705"/>
    </ligand>
</feature>
<gene>
    <name evidence="1" type="primary">murG</name>
    <name type="ordered locus">MCA2429</name>
</gene>
<keyword id="KW-0131">Cell cycle</keyword>
<keyword id="KW-0132">Cell division</keyword>
<keyword id="KW-0997">Cell inner membrane</keyword>
<keyword id="KW-1003">Cell membrane</keyword>
<keyword id="KW-0133">Cell shape</keyword>
<keyword id="KW-0961">Cell wall biogenesis/degradation</keyword>
<keyword id="KW-0328">Glycosyltransferase</keyword>
<keyword id="KW-0472">Membrane</keyword>
<keyword id="KW-0573">Peptidoglycan synthesis</keyword>
<keyword id="KW-1185">Reference proteome</keyword>
<keyword id="KW-0808">Transferase</keyword>
<evidence type="ECO:0000255" key="1">
    <source>
        <dbReference type="HAMAP-Rule" id="MF_00033"/>
    </source>
</evidence>
<proteinExistence type="inferred from homology"/>
<reference key="1">
    <citation type="journal article" date="2004" name="PLoS Biol.">
        <title>Genomic insights into methanotrophy: the complete genome sequence of Methylococcus capsulatus (Bath).</title>
        <authorList>
            <person name="Ward N.L."/>
            <person name="Larsen O."/>
            <person name="Sakwa J."/>
            <person name="Bruseth L."/>
            <person name="Khouri H.M."/>
            <person name="Durkin A.S."/>
            <person name="Dimitrov G."/>
            <person name="Jiang L."/>
            <person name="Scanlan D."/>
            <person name="Kang K.H."/>
            <person name="Lewis M.R."/>
            <person name="Nelson K.E."/>
            <person name="Methe B.A."/>
            <person name="Wu M."/>
            <person name="Heidelberg J.F."/>
            <person name="Paulsen I.T."/>
            <person name="Fouts D.E."/>
            <person name="Ravel J."/>
            <person name="Tettelin H."/>
            <person name="Ren Q."/>
            <person name="Read T.D."/>
            <person name="DeBoy R.T."/>
            <person name="Seshadri R."/>
            <person name="Salzberg S.L."/>
            <person name="Jensen H.B."/>
            <person name="Birkeland N.K."/>
            <person name="Nelson W.C."/>
            <person name="Dodson R.J."/>
            <person name="Grindhaug S.H."/>
            <person name="Holt I.E."/>
            <person name="Eidhammer I."/>
            <person name="Jonasen I."/>
            <person name="Vanaken S."/>
            <person name="Utterback T.R."/>
            <person name="Feldblyum T.V."/>
            <person name="Fraser C.M."/>
            <person name="Lillehaug J.R."/>
            <person name="Eisen J.A."/>
        </authorList>
    </citation>
    <scope>NUCLEOTIDE SEQUENCE [LARGE SCALE GENOMIC DNA]</scope>
    <source>
        <strain>ATCC 33009 / NCIMB 11132 / Bath</strain>
    </source>
</reference>
<accession>Q604V7</accession>
<organism>
    <name type="scientific">Methylococcus capsulatus (strain ATCC 33009 / NCIMB 11132 / Bath)</name>
    <dbReference type="NCBI Taxonomy" id="243233"/>
    <lineage>
        <taxon>Bacteria</taxon>
        <taxon>Pseudomonadati</taxon>
        <taxon>Pseudomonadota</taxon>
        <taxon>Gammaproteobacteria</taxon>
        <taxon>Methylococcales</taxon>
        <taxon>Methylococcaceae</taxon>
        <taxon>Methylococcus</taxon>
    </lineage>
</organism>
<dbReference type="EC" id="2.4.1.227" evidence="1"/>
<dbReference type="EMBL" id="AE017282">
    <property type="protein sequence ID" value="AAU91479.1"/>
    <property type="molecule type" value="Genomic_DNA"/>
</dbReference>
<dbReference type="RefSeq" id="WP_010961654.1">
    <property type="nucleotide sequence ID" value="NC_002977.6"/>
</dbReference>
<dbReference type="SMR" id="Q604V7"/>
<dbReference type="STRING" id="243233.MCA2429"/>
<dbReference type="CAZy" id="GT28">
    <property type="family name" value="Glycosyltransferase Family 28"/>
</dbReference>
<dbReference type="GeneID" id="88224630"/>
<dbReference type="KEGG" id="mca:MCA2429"/>
<dbReference type="eggNOG" id="COG0707">
    <property type="taxonomic scope" value="Bacteria"/>
</dbReference>
<dbReference type="HOGENOM" id="CLU_037404_2_0_6"/>
<dbReference type="UniPathway" id="UPA00219"/>
<dbReference type="Proteomes" id="UP000006821">
    <property type="component" value="Chromosome"/>
</dbReference>
<dbReference type="GO" id="GO:0005886">
    <property type="term" value="C:plasma membrane"/>
    <property type="evidence" value="ECO:0007669"/>
    <property type="project" value="UniProtKB-SubCell"/>
</dbReference>
<dbReference type="GO" id="GO:0051991">
    <property type="term" value="F:UDP-N-acetyl-D-glucosamine:N-acetylmuramoyl-L-alanyl-D-glutamyl-meso-2,6-diaminopimelyl-D-alanyl-D-alanine-diphosphoundecaprenol 4-beta-N-acetylglucosaminlytransferase activity"/>
    <property type="evidence" value="ECO:0007669"/>
    <property type="project" value="RHEA"/>
</dbReference>
<dbReference type="GO" id="GO:0050511">
    <property type="term" value="F:undecaprenyldiphospho-muramoylpentapeptide beta-N-acetylglucosaminyltransferase activity"/>
    <property type="evidence" value="ECO:0007669"/>
    <property type="project" value="UniProtKB-UniRule"/>
</dbReference>
<dbReference type="GO" id="GO:0005975">
    <property type="term" value="P:carbohydrate metabolic process"/>
    <property type="evidence" value="ECO:0007669"/>
    <property type="project" value="InterPro"/>
</dbReference>
<dbReference type="GO" id="GO:0051301">
    <property type="term" value="P:cell division"/>
    <property type="evidence" value="ECO:0007669"/>
    <property type="project" value="UniProtKB-KW"/>
</dbReference>
<dbReference type="GO" id="GO:0071555">
    <property type="term" value="P:cell wall organization"/>
    <property type="evidence" value="ECO:0007669"/>
    <property type="project" value="UniProtKB-KW"/>
</dbReference>
<dbReference type="GO" id="GO:0030259">
    <property type="term" value="P:lipid glycosylation"/>
    <property type="evidence" value="ECO:0007669"/>
    <property type="project" value="UniProtKB-UniRule"/>
</dbReference>
<dbReference type="GO" id="GO:0009252">
    <property type="term" value="P:peptidoglycan biosynthetic process"/>
    <property type="evidence" value="ECO:0007669"/>
    <property type="project" value="UniProtKB-UniRule"/>
</dbReference>
<dbReference type="GO" id="GO:0008360">
    <property type="term" value="P:regulation of cell shape"/>
    <property type="evidence" value="ECO:0007669"/>
    <property type="project" value="UniProtKB-KW"/>
</dbReference>
<dbReference type="CDD" id="cd03785">
    <property type="entry name" value="GT28_MurG"/>
    <property type="match status" value="1"/>
</dbReference>
<dbReference type="Gene3D" id="3.40.50.2000">
    <property type="entry name" value="Glycogen Phosphorylase B"/>
    <property type="match status" value="2"/>
</dbReference>
<dbReference type="HAMAP" id="MF_00033">
    <property type="entry name" value="MurG"/>
    <property type="match status" value="1"/>
</dbReference>
<dbReference type="InterPro" id="IPR006009">
    <property type="entry name" value="GlcNAc_MurG"/>
</dbReference>
<dbReference type="InterPro" id="IPR007235">
    <property type="entry name" value="Glyco_trans_28_C"/>
</dbReference>
<dbReference type="InterPro" id="IPR004276">
    <property type="entry name" value="GlycoTrans_28_N"/>
</dbReference>
<dbReference type="NCBIfam" id="TIGR01133">
    <property type="entry name" value="murG"/>
    <property type="match status" value="1"/>
</dbReference>
<dbReference type="PANTHER" id="PTHR21015:SF22">
    <property type="entry name" value="GLYCOSYLTRANSFERASE"/>
    <property type="match status" value="1"/>
</dbReference>
<dbReference type="PANTHER" id="PTHR21015">
    <property type="entry name" value="UDP-N-ACETYLGLUCOSAMINE--N-ACETYLMURAMYL-(PENTAPEPTIDE) PYROPHOSPHORYL-UNDECAPRENOL N-ACETYLGLUCOSAMINE TRANSFERASE 1"/>
    <property type="match status" value="1"/>
</dbReference>
<dbReference type="Pfam" id="PF04101">
    <property type="entry name" value="Glyco_tran_28_C"/>
    <property type="match status" value="1"/>
</dbReference>
<dbReference type="Pfam" id="PF03033">
    <property type="entry name" value="Glyco_transf_28"/>
    <property type="match status" value="1"/>
</dbReference>
<dbReference type="SUPFAM" id="SSF53756">
    <property type="entry name" value="UDP-Glycosyltransferase/glycogen phosphorylase"/>
    <property type="match status" value="1"/>
</dbReference>